<name>RK36_THEPA</name>
<gene>
    <name type="primary">rpl36</name>
    <name type="ordered locus">TP05_0015</name>
</gene>
<keyword id="KW-0933">Apicoplast</keyword>
<keyword id="KW-0934">Plastid</keyword>
<keyword id="KW-1185">Reference proteome</keyword>
<keyword id="KW-0687">Ribonucleoprotein</keyword>
<keyword id="KW-0689">Ribosomal protein</keyword>
<protein>
    <recommendedName>
        <fullName evidence="1">Large ribosomal subunit protein bL36c</fullName>
    </recommendedName>
    <alternativeName>
        <fullName>50S ribosomal protein L36, apicoplast</fullName>
    </alternativeName>
</protein>
<feature type="chain" id="PRO_0000232684" description="Large ribosomal subunit protein bL36c">
    <location>
        <begin position="1"/>
        <end position="38"/>
    </location>
</feature>
<dbReference type="EMBL" id="AAGK01000009">
    <property type="protein sequence ID" value="EAN30401.1"/>
    <property type="molecule type" value="Genomic_DNA"/>
</dbReference>
<dbReference type="RefSeq" id="XP_762684.1">
    <property type="nucleotide sequence ID" value="XM_757591.1"/>
</dbReference>
<dbReference type="SMR" id="Q4MYA8"/>
<dbReference type="FunCoup" id="Q4MYA8">
    <property type="interactions" value="1"/>
</dbReference>
<dbReference type="EnsemblProtists" id="EAN30401">
    <property type="protein sequence ID" value="EAN30401"/>
    <property type="gene ID" value="TP05_0015"/>
</dbReference>
<dbReference type="GeneID" id="3882270"/>
<dbReference type="KEGG" id="tpv:TP05_0015"/>
<dbReference type="InParanoid" id="Q4MYA8"/>
<dbReference type="Proteomes" id="UP000001949">
    <property type="component" value="Unassembled WGS sequence"/>
</dbReference>
<dbReference type="GO" id="GO:0020011">
    <property type="term" value="C:apicoplast"/>
    <property type="evidence" value="ECO:0007669"/>
    <property type="project" value="UniProtKB-SubCell"/>
</dbReference>
<dbReference type="GO" id="GO:1990904">
    <property type="term" value="C:ribonucleoprotein complex"/>
    <property type="evidence" value="ECO:0007669"/>
    <property type="project" value="UniProtKB-KW"/>
</dbReference>
<dbReference type="GO" id="GO:0005840">
    <property type="term" value="C:ribosome"/>
    <property type="evidence" value="ECO:0007669"/>
    <property type="project" value="UniProtKB-KW"/>
</dbReference>
<dbReference type="GO" id="GO:0003735">
    <property type="term" value="F:structural constituent of ribosome"/>
    <property type="evidence" value="ECO:0007669"/>
    <property type="project" value="InterPro"/>
</dbReference>
<dbReference type="GO" id="GO:0006412">
    <property type="term" value="P:translation"/>
    <property type="evidence" value="ECO:0007669"/>
    <property type="project" value="InterPro"/>
</dbReference>
<dbReference type="InterPro" id="IPR000473">
    <property type="entry name" value="Ribosomal_bL36"/>
</dbReference>
<dbReference type="InterPro" id="IPR035977">
    <property type="entry name" value="Ribosomal_bL36_sp"/>
</dbReference>
<dbReference type="NCBIfam" id="TIGR01022">
    <property type="entry name" value="rpmJ_bact"/>
    <property type="match status" value="1"/>
</dbReference>
<dbReference type="Pfam" id="PF00444">
    <property type="entry name" value="Ribosomal_L36"/>
    <property type="match status" value="1"/>
</dbReference>
<dbReference type="SUPFAM" id="SSF57840">
    <property type="entry name" value="Ribosomal protein L36"/>
    <property type="match status" value="1"/>
</dbReference>
<organism>
    <name type="scientific">Theileria parva</name>
    <name type="common">East coast fever infection agent</name>
    <dbReference type="NCBI Taxonomy" id="5875"/>
    <lineage>
        <taxon>Eukaryota</taxon>
        <taxon>Sar</taxon>
        <taxon>Alveolata</taxon>
        <taxon>Apicomplexa</taxon>
        <taxon>Aconoidasida</taxon>
        <taxon>Piroplasmida</taxon>
        <taxon>Theileriidae</taxon>
        <taxon>Theileria</taxon>
    </lineage>
</organism>
<sequence>MKTKTSIKQICNLCKIVRRNKRLVNTCKLHKNHKHKQK</sequence>
<comment type="subcellular location">
    <subcellularLocation>
        <location>Plastid</location>
        <location>Apicoplast</location>
    </subcellularLocation>
</comment>
<comment type="similarity">
    <text evidence="1">Belongs to the bacterial ribosomal protein bL36 family.</text>
</comment>
<reference key="1">
    <citation type="journal article" date="2005" name="Science">
        <title>Genome sequence of Theileria parva, a bovine pathogen that transforms lymphocytes.</title>
        <authorList>
            <person name="Gardner M.J."/>
            <person name="Bishop R."/>
            <person name="Shah T."/>
            <person name="de Villiers E.P."/>
            <person name="Carlton J.M."/>
            <person name="Hall N."/>
            <person name="Ren Q."/>
            <person name="Paulsen I.T."/>
            <person name="Pain A."/>
            <person name="Berriman M."/>
            <person name="Wilson R.J.M."/>
            <person name="Sato S."/>
            <person name="Ralph S.A."/>
            <person name="Mann D.J."/>
            <person name="Xiong Z."/>
            <person name="Shallom S.J."/>
            <person name="Weidman J."/>
            <person name="Jiang L."/>
            <person name="Lynn J."/>
            <person name="Weaver B."/>
            <person name="Shoaibi A."/>
            <person name="Domingo A.R."/>
            <person name="Wasawo D."/>
            <person name="Crabtree J."/>
            <person name="Wortman J.R."/>
            <person name="Haas B."/>
            <person name="Angiuoli S.V."/>
            <person name="Creasy T.H."/>
            <person name="Lu C."/>
            <person name="Suh B."/>
            <person name="Silva J.C."/>
            <person name="Utterback T.R."/>
            <person name="Feldblyum T.V."/>
            <person name="Pertea M."/>
            <person name="Allen J."/>
            <person name="Nierman W.C."/>
            <person name="Taracha E.L.N."/>
            <person name="Salzberg S.L."/>
            <person name="White O.R."/>
            <person name="Fitzhugh H.A."/>
            <person name="Morzaria S."/>
            <person name="Venter J.C."/>
            <person name="Fraser C.M."/>
            <person name="Nene V."/>
        </authorList>
    </citation>
    <scope>NUCLEOTIDE SEQUENCE [LARGE SCALE GENOMIC DNA]</scope>
    <source>
        <strain>Muguga</strain>
    </source>
</reference>
<proteinExistence type="inferred from homology"/>
<geneLocation type="apicoplast"/>
<accession>Q4MYA8</accession>
<evidence type="ECO:0000305" key="1"/>